<evidence type="ECO:0000255" key="1">
    <source>
        <dbReference type="HAMAP-Rule" id="MF_00507"/>
    </source>
</evidence>
<keyword id="KW-1185">Reference proteome</keyword>
<dbReference type="EMBL" id="CP000038">
    <property type="protein sequence ID" value="AAZ88060.1"/>
    <property type="molecule type" value="Genomic_DNA"/>
</dbReference>
<dbReference type="RefSeq" id="WP_000457334.1">
    <property type="nucleotide sequence ID" value="NC_007384.1"/>
</dbReference>
<dbReference type="SMR" id="Q3Z2F2"/>
<dbReference type="KEGG" id="ssn:SSON_1349"/>
<dbReference type="HOGENOM" id="CLU_185263_0_0_6"/>
<dbReference type="Proteomes" id="UP000002529">
    <property type="component" value="Chromosome"/>
</dbReference>
<dbReference type="HAMAP" id="MF_00507">
    <property type="entry name" value="UPF0181"/>
    <property type="match status" value="1"/>
</dbReference>
<dbReference type="InterPro" id="IPR005371">
    <property type="entry name" value="UPF0181"/>
</dbReference>
<dbReference type="NCBIfam" id="NF003476">
    <property type="entry name" value="PRK05114.1"/>
    <property type="match status" value="1"/>
</dbReference>
<dbReference type="Pfam" id="PF03701">
    <property type="entry name" value="UPF0181"/>
    <property type="match status" value="1"/>
</dbReference>
<name>YOAH_SHISS</name>
<feature type="chain" id="PRO_0000236635" description="UPF0181 protein YoaH">
    <location>
        <begin position="1"/>
        <end position="59"/>
    </location>
</feature>
<comment type="similarity">
    <text evidence="1">Belongs to the UPF0181 family.</text>
</comment>
<reference key="1">
    <citation type="journal article" date="2005" name="Nucleic Acids Res.">
        <title>Genome dynamics and diversity of Shigella species, the etiologic agents of bacillary dysentery.</title>
        <authorList>
            <person name="Yang F."/>
            <person name="Yang J."/>
            <person name="Zhang X."/>
            <person name="Chen L."/>
            <person name="Jiang Y."/>
            <person name="Yan Y."/>
            <person name="Tang X."/>
            <person name="Wang J."/>
            <person name="Xiong Z."/>
            <person name="Dong J."/>
            <person name="Xue Y."/>
            <person name="Zhu Y."/>
            <person name="Xu X."/>
            <person name="Sun L."/>
            <person name="Chen S."/>
            <person name="Nie H."/>
            <person name="Peng J."/>
            <person name="Xu J."/>
            <person name="Wang Y."/>
            <person name="Yuan Z."/>
            <person name="Wen Y."/>
            <person name="Yao Z."/>
            <person name="Shen Y."/>
            <person name="Qiang B."/>
            <person name="Hou Y."/>
            <person name="Yu J."/>
            <person name="Jin Q."/>
        </authorList>
    </citation>
    <scope>NUCLEOTIDE SEQUENCE [LARGE SCALE GENOMIC DNA]</scope>
    <source>
        <strain>Ss046</strain>
    </source>
</reference>
<organism>
    <name type="scientific">Shigella sonnei (strain Ss046)</name>
    <dbReference type="NCBI Taxonomy" id="300269"/>
    <lineage>
        <taxon>Bacteria</taxon>
        <taxon>Pseudomonadati</taxon>
        <taxon>Pseudomonadota</taxon>
        <taxon>Gammaproteobacteria</taxon>
        <taxon>Enterobacterales</taxon>
        <taxon>Enterobacteriaceae</taxon>
        <taxon>Shigella</taxon>
    </lineage>
</organism>
<sequence>MFAGLPSLTHEQQQKAVERIQELMAQGMSSGQAIALVAEELRANHSGERIVARFEDEDE</sequence>
<accession>Q3Z2F2</accession>
<gene>
    <name evidence="1" type="primary">yoaH</name>
    <name type="ordered locus">SSON_1349</name>
</gene>
<protein>
    <recommendedName>
        <fullName evidence="1">UPF0181 protein YoaH</fullName>
    </recommendedName>
</protein>
<proteinExistence type="inferred from homology"/>